<name>LIPA_BEII9</name>
<evidence type="ECO:0000255" key="1">
    <source>
        <dbReference type="HAMAP-Rule" id="MF_00206"/>
    </source>
</evidence>
<evidence type="ECO:0000255" key="2">
    <source>
        <dbReference type="PROSITE-ProRule" id="PRU01266"/>
    </source>
</evidence>
<evidence type="ECO:0000256" key="3">
    <source>
        <dbReference type="SAM" id="MobiDB-lite"/>
    </source>
</evidence>
<accession>B2IB58</accession>
<reference key="1">
    <citation type="journal article" date="2010" name="J. Bacteriol.">
        <title>Complete genome sequence of Beijerinckia indica subsp. indica.</title>
        <authorList>
            <person name="Tamas I."/>
            <person name="Dedysh S.N."/>
            <person name="Liesack W."/>
            <person name="Stott M.B."/>
            <person name="Alam M."/>
            <person name="Murrell J.C."/>
            <person name="Dunfield P.F."/>
        </authorList>
    </citation>
    <scope>NUCLEOTIDE SEQUENCE [LARGE SCALE GENOMIC DNA]</scope>
    <source>
        <strain>ATCC 9039 / DSM 1715 / NCIMB 8712</strain>
    </source>
</reference>
<dbReference type="EC" id="2.8.1.8" evidence="1"/>
<dbReference type="EMBL" id="CP001016">
    <property type="protein sequence ID" value="ACB95142.1"/>
    <property type="molecule type" value="Genomic_DNA"/>
</dbReference>
<dbReference type="RefSeq" id="WP_012384499.1">
    <property type="nucleotide sequence ID" value="NC_010581.1"/>
</dbReference>
<dbReference type="SMR" id="B2IB58"/>
<dbReference type="STRING" id="395963.Bind_1509"/>
<dbReference type="KEGG" id="bid:Bind_1509"/>
<dbReference type="eggNOG" id="COG0320">
    <property type="taxonomic scope" value="Bacteria"/>
</dbReference>
<dbReference type="HOGENOM" id="CLU_033144_2_1_5"/>
<dbReference type="OrthoDB" id="9787898at2"/>
<dbReference type="UniPathway" id="UPA00538">
    <property type="reaction ID" value="UER00593"/>
</dbReference>
<dbReference type="Proteomes" id="UP000001695">
    <property type="component" value="Chromosome"/>
</dbReference>
<dbReference type="GO" id="GO:0005737">
    <property type="term" value="C:cytoplasm"/>
    <property type="evidence" value="ECO:0007669"/>
    <property type="project" value="UniProtKB-SubCell"/>
</dbReference>
<dbReference type="GO" id="GO:0051539">
    <property type="term" value="F:4 iron, 4 sulfur cluster binding"/>
    <property type="evidence" value="ECO:0007669"/>
    <property type="project" value="UniProtKB-UniRule"/>
</dbReference>
<dbReference type="GO" id="GO:0016992">
    <property type="term" value="F:lipoate synthase activity"/>
    <property type="evidence" value="ECO:0007669"/>
    <property type="project" value="UniProtKB-UniRule"/>
</dbReference>
<dbReference type="GO" id="GO:0046872">
    <property type="term" value="F:metal ion binding"/>
    <property type="evidence" value="ECO:0007669"/>
    <property type="project" value="UniProtKB-KW"/>
</dbReference>
<dbReference type="CDD" id="cd01335">
    <property type="entry name" value="Radical_SAM"/>
    <property type="match status" value="1"/>
</dbReference>
<dbReference type="FunFam" id="3.20.20.70:FF:000040">
    <property type="entry name" value="Lipoyl synthase"/>
    <property type="match status" value="1"/>
</dbReference>
<dbReference type="Gene3D" id="3.20.20.70">
    <property type="entry name" value="Aldolase class I"/>
    <property type="match status" value="1"/>
</dbReference>
<dbReference type="HAMAP" id="MF_00206">
    <property type="entry name" value="Lipoyl_synth"/>
    <property type="match status" value="1"/>
</dbReference>
<dbReference type="InterPro" id="IPR013785">
    <property type="entry name" value="Aldolase_TIM"/>
</dbReference>
<dbReference type="InterPro" id="IPR006638">
    <property type="entry name" value="Elp3/MiaA/NifB-like_rSAM"/>
</dbReference>
<dbReference type="InterPro" id="IPR003698">
    <property type="entry name" value="Lipoyl_synth"/>
</dbReference>
<dbReference type="InterPro" id="IPR007197">
    <property type="entry name" value="rSAM"/>
</dbReference>
<dbReference type="NCBIfam" id="TIGR00510">
    <property type="entry name" value="lipA"/>
    <property type="match status" value="1"/>
</dbReference>
<dbReference type="NCBIfam" id="NF004019">
    <property type="entry name" value="PRK05481.1"/>
    <property type="match status" value="1"/>
</dbReference>
<dbReference type="NCBIfam" id="NF009544">
    <property type="entry name" value="PRK12928.1"/>
    <property type="match status" value="1"/>
</dbReference>
<dbReference type="PANTHER" id="PTHR10949">
    <property type="entry name" value="LIPOYL SYNTHASE"/>
    <property type="match status" value="1"/>
</dbReference>
<dbReference type="PANTHER" id="PTHR10949:SF0">
    <property type="entry name" value="LIPOYL SYNTHASE, MITOCHONDRIAL"/>
    <property type="match status" value="1"/>
</dbReference>
<dbReference type="Pfam" id="PF04055">
    <property type="entry name" value="Radical_SAM"/>
    <property type="match status" value="1"/>
</dbReference>
<dbReference type="PIRSF" id="PIRSF005963">
    <property type="entry name" value="Lipoyl_synth"/>
    <property type="match status" value="1"/>
</dbReference>
<dbReference type="SFLD" id="SFLDF00271">
    <property type="entry name" value="lipoyl_synthase"/>
    <property type="match status" value="1"/>
</dbReference>
<dbReference type="SFLD" id="SFLDS00029">
    <property type="entry name" value="Radical_SAM"/>
    <property type="match status" value="1"/>
</dbReference>
<dbReference type="SMART" id="SM00729">
    <property type="entry name" value="Elp3"/>
    <property type="match status" value="1"/>
</dbReference>
<dbReference type="SUPFAM" id="SSF102114">
    <property type="entry name" value="Radical SAM enzymes"/>
    <property type="match status" value="1"/>
</dbReference>
<dbReference type="PROSITE" id="PS51918">
    <property type="entry name" value="RADICAL_SAM"/>
    <property type="match status" value="1"/>
</dbReference>
<gene>
    <name evidence="1" type="primary">lipA</name>
    <name type="ordered locus">Bind_1509</name>
</gene>
<protein>
    <recommendedName>
        <fullName evidence="1">Lipoyl synthase</fullName>
        <ecNumber evidence="1">2.8.1.8</ecNumber>
    </recommendedName>
    <alternativeName>
        <fullName evidence="1">Lip-syn</fullName>
        <shortName evidence="1">LS</shortName>
    </alternativeName>
    <alternativeName>
        <fullName evidence="1">Lipoate synthase</fullName>
    </alternativeName>
    <alternativeName>
        <fullName evidence="1">Lipoic acid synthase</fullName>
    </alternativeName>
    <alternativeName>
        <fullName evidence="1">Sulfur insertion protein LipA</fullName>
    </alternativeName>
</protein>
<sequence>MPPLADASTETLSPAEQAAVRHPEKAHRPDQPIARKPDWIRVKAPGSPEWVETQKIVKEHKLVTVCEEAGCPNIGECWAKKHATFMIMGDTCTRACAFCNVKTGLPNGLDPHEPAHIADAVQKLGLSHVVITSVDRDDLADGGAEHFAQVIRAIREASPKTTIEVLTPDFLRKDGALEIVVAARPDVFNHNLETVPAKYLSVRPGARYFHSIRLLQRVKELDPTIFTKSGIMVGLGETRNEVLQLMDDLRTADVDFLTIGQYLQPTRKHHAVEAFITPDEFAAYAEVANAKGFLLVSASPLTRSSHHAGEDFARLKAARLERLGR</sequence>
<proteinExistence type="inferred from homology"/>
<keyword id="KW-0004">4Fe-4S</keyword>
<keyword id="KW-0963">Cytoplasm</keyword>
<keyword id="KW-0408">Iron</keyword>
<keyword id="KW-0411">Iron-sulfur</keyword>
<keyword id="KW-0479">Metal-binding</keyword>
<keyword id="KW-1185">Reference proteome</keyword>
<keyword id="KW-0949">S-adenosyl-L-methionine</keyword>
<keyword id="KW-0808">Transferase</keyword>
<feature type="chain" id="PRO_1000099590" description="Lipoyl synthase">
    <location>
        <begin position="1"/>
        <end position="325"/>
    </location>
</feature>
<feature type="domain" description="Radical SAM core" evidence="2">
    <location>
        <begin position="78"/>
        <end position="294"/>
    </location>
</feature>
<feature type="region of interest" description="Disordered" evidence="3">
    <location>
        <begin position="1"/>
        <end position="32"/>
    </location>
</feature>
<feature type="compositionally biased region" description="Basic and acidic residues" evidence="3">
    <location>
        <begin position="19"/>
        <end position="32"/>
    </location>
</feature>
<feature type="binding site" evidence="1">
    <location>
        <position position="66"/>
    </location>
    <ligand>
        <name>[4Fe-4S] cluster</name>
        <dbReference type="ChEBI" id="CHEBI:49883"/>
        <label>1</label>
    </ligand>
</feature>
<feature type="binding site" evidence="1">
    <location>
        <position position="71"/>
    </location>
    <ligand>
        <name>[4Fe-4S] cluster</name>
        <dbReference type="ChEBI" id="CHEBI:49883"/>
        <label>1</label>
    </ligand>
</feature>
<feature type="binding site" evidence="1">
    <location>
        <position position="77"/>
    </location>
    <ligand>
        <name>[4Fe-4S] cluster</name>
        <dbReference type="ChEBI" id="CHEBI:49883"/>
        <label>1</label>
    </ligand>
</feature>
<feature type="binding site" evidence="1">
    <location>
        <position position="92"/>
    </location>
    <ligand>
        <name>[4Fe-4S] cluster</name>
        <dbReference type="ChEBI" id="CHEBI:49883"/>
        <label>2</label>
        <note>4Fe-4S-S-AdoMet</note>
    </ligand>
</feature>
<feature type="binding site" evidence="1">
    <location>
        <position position="96"/>
    </location>
    <ligand>
        <name>[4Fe-4S] cluster</name>
        <dbReference type="ChEBI" id="CHEBI:49883"/>
        <label>2</label>
        <note>4Fe-4S-S-AdoMet</note>
    </ligand>
</feature>
<feature type="binding site" evidence="1">
    <location>
        <position position="99"/>
    </location>
    <ligand>
        <name>[4Fe-4S] cluster</name>
        <dbReference type="ChEBI" id="CHEBI:49883"/>
        <label>2</label>
        <note>4Fe-4S-S-AdoMet</note>
    </ligand>
</feature>
<feature type="binding site" evidence="1">
    <location>
        <position position="305"/>
    </location>
    <ligand>
        <name>[4Fe-4S] cluster</name>
        <dbReference type="ChEBI" id="CHEBI:49883"/>
        <label>1</label>
    </ligand>
</feature>
<organism>
    <name type="scientific">Beijerinckia indica subsp. indica (strain ATCC 9039 / DSM 1715 / NCIMB 8712)</name>
    <dbReference type="NCBI Taxonomy" id="395963"/>
    <lineage>
        <taxon>Bacteria</taxon>
        <taxon>Pseudomonadati</taxon>
        <taxon>Pseudomonadota</taxon>
        <taxon>Alphaproteobacteria</taxon>
        <taxon>Hyphomicrobiales</taxon>
        <taxon>Beijerinckiaceae</taxon>
        <taxon>Beijerinckia</taxon>
    </lineage>
</organism>
<comment type="function">
    <text evidence="1">Catalyzes the radical-mediated insertion of two sulfur atoms into the C-6 and C-8 positions of the octanoyl moiety bound to the lipoyl domains of lipoate-dependent enzymes, thereby converting the octanoylated domains into lipoylated derivatives.</text>
</comment>
<comment type="catalytic activity">
    <reaction evidence="1">
        <text>[[Fe-S] cluster scaffold protein carrying a second [4Fe-4S](2+) cluster] + N(6)-octanoyl-L-lysyl-[protein] + 2 oxidized [2Fe-2S]-[ferredoxin] + 2 S-adenosyl-L-methionine + 4 H(+) = [[Fe-S] cluster scaffold protein] + N(6)-[(R)-dihydrolipoyl]-L-lysyl-[protein] + 4 Fe(3+) + 2 hydrogen sulfide + 2 5'-deoxyadenosine + 2 L-methionine + 2 reduced [2Fe-2S]-[ferredoxin]</text>
        <dbReference type="Rhea" id="RHEA:16585"/>
        <dbReference type="Rhea" id="RHEA-COMP:9928"/>
        <dbReference type="Rhea" id="RHEA-COMP:10000"/>
        <dbReference type="Rhea" id="RHEA-COMP:10001"/>
        <dbReference type="Rhea" id="RHEA-COMP:10475"/>
        <dbReference type="Rhea" id="RHEA-COMP:14568"/>
        <dbReference type="Rhea" id="RHEA-COMP:14569"/>
        <dbReference type="ChEBI" id="CHEBI:15378"/>
        <dbReference type="ChEBI" id="CHEBI:17319"/>
        <dbReference type="ChEBI" id="CHEBI:29034"/>
        <dbReference type="ChEBI" id="CHEBI:29919"/>
        <dbReference type="ChEBI" id="CHEBI:33722"/>
        <dbReference type="ChEBI" id="CHEBI:33737"/>
        <dbReference type="ChEBI" id="CHEBI:33738"/>
        <dbReference type="ChEBI" id="CHEBI:57844"/>
        <dbReference type="ChEBI" id="CHEBI:59789"/>
        <dbReference type="ChEBI" id="CHEBI:78809"/>
        <dbReference type="ChEBI" id="CHEBI:83100"/>
        <dbReference type="EC" id="2.8.1.8"/>
    </reaction>
</comment>
<comment type="cofactor">
    <cofactor evidence="1">
        <name>[4Fe-4S] cluster</name>
        <dbReference type="ChEBI" id="CHEBI:49883"/>
    </cofactor>
    <text evidence="1">Binds 2 [4Fe-4S] clusters per subunit. One cluster is coordinated with 3 cysteines and an exchangeable S-adenosyl-L-methionine.</text>
</comment>
<comment type="pathway">
    <text evidence="1">Protein modification; protein lipoylation via endogenous pathway; protein N(6)-(lipoyl)lysine from octanoyl-[acyl-carrier-protein]: step 2/2.</text>
</comment>
<comment type="subcellular location">
    <subcellularLocation>
        <location evidence="1">Cytoplasm</location>
    </subcellularLocation>
</comment>
<comment type="similarity">
    <text evidence="1">Belongs to the radical SAM superfamily. Lipoyl synthase family.</text>
</comment>